<protein>
    <recommendedName>
        <fullName evidence="1">Heme A synthase</fullName>
        <shortName evidence="1">HAS</shortName>
        <ecNumber evidence="1">1.17.99.9</ecNumber>
    </recommendedName>
    <alternativeName>
        <fullName evidence="1">Cytochrome aa3-controlling protein</fullName>
    </alternativeName>
</protein>
<name>CTAA_BACAA</name>
<organism>
    <name type="scientific">Bacillus anthracis (strain A0248)</name>
    <dbReference type="NCBI Taxonomy" id="592021"/>
    <lineage>
        <taxon>Bacteria</taxon>
        <taxon>Bacillati</taxon>
        <taxon>Bacillota</taxon>
        <taxon>Bacilli</taxon>
        <taxon>Bacillales</taxon>
        <taxon>Bacillaceae</taxon>
        <taxon>Bacillus</taxon>
        <taxon>Bacillus cereus group</taxon>
    </lineage>
</organism>
<dbReference type="EC" id="1.17.99.9" evidence="1"/>
<dbReference type="EMBL" id="CP001598">
    <property type="protein sequence ID" value="ACQ47192.1"/>
    <property type="molecule type" value="Genomic_DNA"/>
</dbReference>
<dbReference type="RefSeq" id="WP_001188730.1">
    <property type="nucleotide sequence ID" value="NC_012659.1"/>
</dbReference>
<dbReference type="SMR" id="C3P6V3"/>
<dbReference type="GeneID" id="45023833"/>
<dbReference type="KEGG" id="bai:BAA_4181"/>
<dbReference type="HOGENOM" id="CLU_041525_3_1_9"/>
<dbReference type="UniPathway" id="UPA00269">
    <property type="reaction ID" value="UER00713"/>
</dbReference>
<dbReference type="GO" id="GO:0005886">
    <property type="term" value="C:plasma membrane"/>
    <property type="evidence" value="ECO:0007669"/>
    <property type="project" value="UniProtKB-SubCell"/>
</dbReference>
<dbReference type="GO" id="GO:0046872">
    <property type="term" value="F:metal ion binding"/>
    <property type="evidence" value="ECO:0007669"/>
    <property type="project" value="UniProtKB-KW"/>
</dbReference>
<dbReference type="GO" id="GO:0016653">
    <property type="term" value="F:oxidoreductase activity, acting on NAD(P)H, heme protein as acceptor"/>
    <property type="evidence" value="ECO:0007669"/>
    <property type="project" value="InterPro"/>
</dbReference>
<dbReference type="GO" id="GO:0006784">
    <property type="term" value="P:heme A biosynthetic process"/>
    <property type="evidence" value="ECO:0007669"/>
    <property type="project" value="UniProtKB-UniRule"/>
</dbReference>
<dbReference type="HAMAP" id="MF_01664">
    <property type="entry name" value="HemeA_synth_type1"/>
    <property type="match status" value="1"/>
</dbReference>
<dbReference type="InterPro" id="IPR003780">
    <property type="entry name" value="COX15/CtaA_fam"/>
</dbReference>
<dbReference type="InterPro" id="IPR050450">
    <property type="entry name" value="COX15/CtaA_HemeA_synthase"/>
</dbReference>
<dbReference type="InterPro" id="IPR023755">
    <property type="entry name" value="HemeA_Synthase_type1"/>
</dbReference>
<dbReference type="PANTHER" id="PTHR35457">
    <property type="entry name" value="HEME A SYNTHASE"/>
    <property type="match status" value="1"/>
</dbReference>
<dbReference type="PANTHER" id="PTHR35457:SF1">
    <property type="entry name" value="HEME A SYNTHASE"/>
    <property type="match status" value="1"/>
</dbReference>
<dbReference type="Pfam" id="PF02628">
    <property type="entry name" value="COX15-CtaA"/>
    <property type="match status" value="1"/>
</dbReference>
<keyword id="KW-1003">Cell membrane</keyword>
<keyword id="KW-1015">Disulfide bond</keyword>
<keyword id="KW-0350">Heme biosynthesis</keyword>
<keyword id="KW-0408">Iron</keyword>
<keyword id="KW-0472">Membrane</keyword>
<keyword id="KW-0479">Metal-binding</keyword>
<keyword id="KW-0560">Oxidoreductase</keyword>
<keyword id="KW-0812">Transmembrane</keyword>
<keyword id="KW-1133">Transmembrane helix</keyword>
<accession>C3P6V3</accession>
<gene>
    <name evidence="1" type="primary">ctaA</name>
    <name type="ordered locus">BAA_4181</name>
</gene>
<feature type="chain" id="PRO_1000187234" description="Heme A synthase">
    <location>
        <begin position="1"/>
        <end position="311"/>
    </location>
</feature>
<feature type="topological domain" description="Cytoplasmic" evidence="1">
    <location>
        <begin position="1"/>
        <end position="6"/>
    </location>
</feature>
<feature type="transmembrane region" description="Helical" evidence="1">
    <location>
        <begin position="7"/>
        <end position="27"/>
    </location>
</feature>
<feature type="topological domain" description="Extracellular" evidence="1">
    <location>
        <begin position="28"/>
        <end position="62"/>
    </location>
</feature>
<feature type="transmembrane region" description="Helical" evidence="1">
    <location>
        <begin position="63"/>
        <end position="83"/>
    </location>
</feature>
<feature type="topological domain" description="Cytoplasmic" evidence="1">
    <location>
        <begin position="84"/>
        <end position="91"/>
    </location>
</feature>
<feature type="transmembrane region" description="Helical" evidence="1">
    <location>
        <begin position="92"/>
        <end position="112"/>
    </location>
</feature>
<feature type="topological domain" description="Extracellular" evidence="1">
    <location>
        <begin position="113"/>
        <end position="121"/>
    </location>
</feature>
<feature type="transmembrane region" description="Helical" evidence="1">
    <location>
        <begin position="122"/>
        <end position="142"/>
    </location>
</feature>
<feature type="topological domain" description="Cytoplasmic" evidence="1">
    <location>
        <begin position="143"/>
        <end position="159"/>
    </location>
</feature>
<feature type="transmembrane region" description="Helical" evidence="1">
    <location>
        <begin position="160"/>
        <end position="180"/>
    </location>
</feature>
<feature type="topological domain" description="Extracellular" evidence="1">
    <location>
        <begin position="181"/>
        <end position="211"/>
    </location>
</feature>
<feature type="transmembrane region" description="Helical" evidence="1">
    <location>
        <begin position="212"/>
        <end position="232"/>
    </location>
</feature>
<feature type="topological domain" description="Cytoplasmic" evidence="1">
    <location>
        <begin position="233"/>
        <end position="243"/>
    </location>
</feature>
<feature type="transmembrane region" description="Helical" evidence="1">
    <location>
        <begin position="244"/>
        <end position="264"/>
    </location>
</feature>
<feature type="topological domain" description="Extracellular" evidence="1">
    <location>
        <begin position="265"/>
        <end position="271"/>
    </location>
</feature>
<feature type="transmembrane region" description="Helical" evidence="1">
    <location>
        <begin position="272"/>
        <end position="292"/>
    </location>
</feature>
<feature type="topological domain" description="Cytoplasmic" evidence="1">
    <location>
        <begin position="293"/>
        <end position="311"/>
    </location>
</feature>
<feature type="active site" evidence="1">
    <location>
        <position position="58"/>
    </location>
</feature>
<feature type="binding site" description="axial binding residue" evidence="1">
    <location>
        <position position="61"/>
    </location>
    <ligand>
        <name>heme o</name>
        <dbReference type="ChEBI" id="CHEBI:24480"/>
    </ligand>
    <ligandPart>
        <name>Fe</name>
        <dbReference type="ChEBI" id="CHEBI:18248"/>
    </ligandPart>
</feature>
<feature type="binding site" description="axial binding residue" evidence="1">
    <location>
        <position position="123"/>
    </location>
    <ligand>
        <name>heme o</name>
        <dbReference type="ChEBI" id="CHEBI:24480"/>
    </ligand>
    <ligandPart>
        <name>Fe</name>
        <dbReference type="ChEBI" id="CHEBI:18248"/>
    </ligandPart>
</feature>
<feature type="binding site" description="axial binding residue" evidence="1">
    <location>
        <position position="213"/>
    </location>
    <ligand>
        <name>heme b</name>
        <dbReference type="ChEBI" id="CHEBI:60344"/>
    </ligand>
    <ligandPart>
        <name>Fe</name>
        <dbReference type="ChEBI" id="CHEBI:18248"/>
    </ligandPart>
</feature>
<feature type="binding site" description="axial binding residue" evidence="1">
    <location>
        <position position="275"/>
    </location>
    <ligand>
        <name>heme b</name>
        <dbReference type="ChEBI" id="CHEBI:60344"/>
    </ligand>
    <ligandPart>
        <name>Fe</name>
        <dbReference type="ChEBI" id="CHEBI:18248"/>
    </ligandPart>
</feature>
<feature type="disulfide bond" description="Essential for catalytic activity" evidence="1">
    <location>
        <begin position="35"/>
        <end position="42"/>
    </location>
</feature>
<feature type="disulfide bond" evidence="1">
    <location>
        <begin position="189"/>
        <end position="195"/>
    </location>
</feature>
<sequence>MQRFIKWLAVITSLDLLIVLLGGALVTKTGSGQGCGKSWPLCNGEFVPSNLSMETIIELSHRLTSGSAGILVTLLCILSWKYYKHVRETKTLAILSFVFLVAQALMGAAAVVWGQMPAVLAIHFGISLISFASVILLTCLIFEIDQKFDARSLIMDKKMKFHIYGVTIYCYLVVYTGALVRHERASLACPDFPLCSKNRPMPTQLHEWVQMGHRLAAMLIFVWILYAMILAIRHYKQQPVVYWGWIISFILVTLQAIVGILVVFTNASLAMALLHSLFISCLFAVLCYLVMLGTRSKVNAKEAASTSKQTK</sequence>
<reference key="1">
    <citation type="submission" date="2009-04" db="EMBL/GenBank/DDBJ databases">
        <title>Genome sequence of Bacillus anthracis A0248.</title>
        <authorList>
            <person name="Dodson R.J."/>
            <person name="Munk A.C."/>
            <person name="Bruce D."/>
            <person name="Detter C."/>
            <person name="Tapia R."/>
            <person name="Sutton G."/>
            <person name="Sims D."/>
            <person name="Brettin T."/>
        </authorList>
    </citation>
    <scope>NUCLEOTIDE SEQUENCE [LARGE SCALE GENOMIC DNA]</scope>
    <source>
        <strain>A0248</strain>
    </source>
</reference>
<proteinExistence type="inferred from homology"/>
<comment type="function">
    <text evidence="1">Catalyzes the conversion of heme O to heme A by two successive hydroxylations of the methyl group at C8. The first hydroxylation forms heme I, the second hydroxylation results in an unstable dihydroxymethyl group, which spontaneously dehydrates, resulting in the formyl group of heme A.</text>
</comment>
<comment type="catalytic activity">
    <reaction evidence="1">
        <text>Fe(II)-heme o + 2 A + H2O = Fe(II)-heme a + 2 AH2</text>
        <dbReference type="Rhea" id="RHEA:63388"/>
        <dbReference type="ChEBI" id="CHEBI:13193"/>
        <dbReference type="ChEBI" id="CHEBI:15377"/>
        <dbReference type="ChEBI" id="CHEBI:17499"/>
        <dbReference type="ChEBI" id="CHEBI:60530"/>
        <dbReference type="ChEBI" id="CHEBI:61715"/>
        <dbReference type="EC" id="1.17.99.9"/>
    </reaction>
    <physiologicalReaction direction="left-to-right" evidence="1">
        <dbReference type="Rhea" id="RHEA:63389"/>
    </physiologicalReaction>
</comment>
<comment type="cofactor">
    <cofactor evidence="1">
        <name>heme b</name>
        <dbReference type="ChEBI" id="CHEBI:60344"/>
    </cofactor>
</comment>
<comment type="pathway">
    <text evidence="1">Porphyrin-containing compound metabolism; heme A biosynthesis; heme A from heme O: step 1/1.</text>
</comment>
<comment type="subunit">
    <text evidence="1">Interacts with CtaB.</text>
</comment>
<comment type="subcellular location">
    <subcellularLocation>
        <location evidence="1">Cell membrane</location>
        <topology evidence="1">Multi-pass membrane protein</topology>
    </subcellularLocation>
</comment>
<comment type="domain">
    <text evidence="1">The N-half (TM1-TM4) and C-half (TM5-TM8) domains are connected by an intracellular loop. Each domain is formed from four-helix bundles and they align in a pseudo twofold symmetry manner. The N-half domain is the substrate-heme O binding domain and the C-half domain is the cofactor heme B binding domain.</text>
</comment>
<comment type="domain">
    <text evidence="1">The cysteines of disulfide bond Cys-35 and Cys-42 may be involved in transfer of reducing equivalents from quinol in the membrane to the active site of the enzyme.</text>
</comment>
<comment type="similarity">
    <text evidence="1">Belongs to the COX15/CtaA family. Type 1 subfamily.</text>
</comment>
<evidence type="ECO:0000255" key="1">
    <source>
        <dbReference type="HAMAP-Rule" id="MF_01664"/>
    </source>
</evidence>